<gene>
    <name type="primary">hat-2</name>
    <name type="ORF">NCU06679</name>
</gene>
<evidence type="ECO:0000250" key="1"/>
<evidence type="ECO:0000250" key="2">
    <source>
        <dbReference type="UniProtKB" id="P39984"/>
    </source>
</evidence>
<evidence type="ECO:0000256" key="3">
    <source>
        <dbReference type="SAM" id="MobiDB-lite"/>
    </source>
</evidence>
<evidence type="ECO:0000305" key="4"/>
<feature type="chain" id="PRO_0000227742" description="Histone acetyltransferase type B subunit 2">
    <location>
        <begin position="1"/>
        <end position="446"/>
    </location>
</feature>
<feature type="repeat" description="WD 1">
    <location>
        <begin position="138"/>
        <end position="178"/>
    </location>
</feature>
<feature type="repeat" description="WD 2">
    <location>
        <begin position="189"/>
        <end position="229"/>
    </location>
</feature>
<feature type="repeat" description="WD 3">
    <location>
        <begin position="231"/>
        <end position="270"/>
    </location>
</feature>
<feature type="repeat" description="WD 4">
    <location>
        <begin position="286"/>
        <end position="326"/>
    </location>
</feature>
<feature type="repeat" description="WD 5">
    <location>
        <begin position="330"/>
        <end position="370"/>
    </location>
</feature>
<feature type="repeat" description="WD 6">
    <location>
        <begin position="387"/>
        <end position="427"/>
    </location>
</feature>
<feature type="region of interest" description="Interaction with the histone H4 N-terminus" evidence="2">
    <location>
        <begin position="372"/>
        <end position="376"/>
    </location>
</feature>
<feature type="region of interest" description="Disordered" evidence="3">
    <location>
        <begin position="427"/>
        <end position="446"/>
    </location>
</feature>
<feature type="compositionally biased region" description="Basic and acidic residues" evidence="3">
    <location>
        <begin position="437"/>
        <end position="446"/>
    </location>
</feature>
<dbReference type="EMBL" id="CM002240">
    <property type="protein sequence ID" value="EAA31758.2"/>
    <property type="molecule type" value="Genomic_DNA"/>
</dbReference>
<dbReference type="SMR" id="Q7S7N3"/>
<dbReference type="FunCoup" id="Q7S7N3">
    <property type="interactions" value="1030"/>
</dbReference>
<dbReference type="STRING" id="367110.Q7S7N3"/>
<dbReference type="PaxDb" id="5141-EFNCRP00000006678"/>
<dbReference type="EnsemblFungi" id="EAA31758">
    <property type="protein sequence ID" value="EAA31758"/>
    <property type="gene ID" value="NCU06679"/>
</dbReference>
<dbReference type="KEGG" id="ncr:NCU06679"/>
<dbReference type="VEuPathDB" id="FungiDB:NCU06679"/>
<dbReference type="HOGENOM" id="CLU_020445_3_2_1"/>
<dbReference type="InParanoid" id="Q7S7N3"/>
<dbReference type="OMA" id="PHEEGCL"/>
<dbReference type="OrthoDB" id="427795at2759"/>
<dbReference type="Proteomes" id="UP000001805">
    <property type="component" value="Chromosome 2, Linkage Group V"/>
</dbReference>
<dbReference type="GO" id="GO:0005737">
    <property type="term" value="C:cytoplasm"/>
    <property type="evidence" value="ECO:0000318"/>
    <property type="project" value="GO_Central"/>
</dbReference>
<dbReference type="GO" id="GO:0005634">
    <property type="term" value="C:nucleus"/>
    <property type="evidence" value="ECO:0000318"/>
    <property type="project" value="GO_Central"/>
</dbReference>
<dbReference type="GO" id="GO:0033698">
    <property type="term" value="C:Rpd3L complex"/>
    <property type="evidence" value="ECO:0000318"/>
    <property type="project" value="GO_Central"/>
</dbReference>
<dbReference type="GO" id="GO:0070210">
    <property type="term" value="C:Rpd3L-Expanded complex"/>
    <property type="evidence" value="ECO:0000318"/>
    <property type="project" value="GO_Central"/>
</dbReference>
<dbReference type="GO" id="GO:0042393">
    <property type="term" value="F:histone binding"/>
    <property type="evidence" value="ECO:0000318"/>
    <property type="project" value="GO_Central"/>
</dbReference>
<dbReference type="GO" id="GO:0006338">
    <property type="term" value="P:chromatin remodeling"/>
    <property type="evidence" value="ECO:0000318"/>
    <property type="project" value="GO_Central"/>
</dbReference>
<dbReference type="GO" id="GO:0006355">
    <property type="term" value="P:regulation of DNA-templated transcription"/>
    <property type="evidence" value="ECO:0000318"/>
    <property type="project" value="GO_Central"/>
</dbReference>
<dbReference type="Gene3D" id="2.130.10.10">
    <property type="entry name" value="YVTN repeat-like/Quinoprotein amine dehydrogenase"/>
    <property type="match status" value="1"/>
</dbReference>
<dbReference type="InterPro" id="IPR020472">
    <property type="entry name" value="G-protein_beta_WD-40_rep"/>
</dbReference>
<dbReference type="InterPro" id="IPR022052">
    <property type="entry name" value="Histone-bd_RBBP4-like_N"/>
</dbReference>
<dbReference type="InterPro" id="IPR015943">
    <property type="entry name" value="WD40/YVTN_repeat-like_dom_sf"/>
</dbReference>
<dbReference type="InterPro" id="IPR019775">
    <property type="entry name" value="WD40_repeat_CS"/>
</dbReference>
<dbReference type="InterPro" id="IPR036322">
    <property type="entry name" value="WD40_repeat_dom_sf"/>
</dbReference>
<dbReference type="InterPro" id="IPR001680">
    <property type="entry name" value="WD40_rpt"/>
</dbReference>
<dbReference type="InterPro" id="IPR050459">
    <property type="entry name" value="WD_repeat_RBAP46/RBAP48/MSI1"/>
</dbReference>
<dbReference type="PANTHER" id="PTHR22850">
    <property type="entry name" value="WD40 REPEAT FAMILY"/>
    <property type="match status" value="1"/>
</dbReference>
<dbReference type="Pfam" id="PF12265">
    <property type="entry name" value="CAF1C_H4-bd"/>
    <property type="match status" value="1"/>
</dbReference>
<dbReference type="Pfam" id="PF00400">
    <property type="entry name" value="WD40"/>
    <property type="match status" value="4"/>
</dbReference>
<dbReference type="PRINTS" id="PR00320">
    <property type="entry name" value="GPROTEINBRPT"/>
</dbReference>
<dbReference type="SMART" id="SM00320">
    <property type="entry name" value="WD40"/>
    <property type="match status" value="6"/>
</dbReference>
<dbReference type="SUPFAM" id="SSF50978">
    <property type="entry name" value="WD40 repeat-like"/>
    <property type="match status" value="1"/>
</dbReference>
<dbReference type="PROSITE" id="PS00678">
    <property type="entry name" value="WD_REPEATS_1"/>
    <property type="match status" value="3"/>
</dbReference>
<dbReference type="PROSITE" id="PS50082">
    <property type="entry name" value="WD_REPEATS_2"/>
    <property type="match status" value="3"/>
</dbReference>
<dbReference type="PROSITE" id="PS50294">
    <property type="entry name" value="WD_REPEATS_REGION"/>
    <property type="match status" value="1"/>
</dbReference>
<accession>Q7S7N3</accession>
<keyword id="KW-0156">Chromatin regulator</keyword>
<keyword id="KW-0963">Cytoplasm</keyword>
<keyword id="KW-0539">Nucleus</keyword>
<keyword id="KW-1185">Reference proteome</keyword>
<keyword id="KW-0677">Repeat</keyword>
<keyword id="KW-0853">WD repeat</keyword>
<reference key="1">
    <citation type="journal article" date="2003" name="Nature">
        <title>The genome sequence of the filamentous fungus Neurospora crassa.</title>
        <authorList>
            <person name="Galagan J.E."/>
            <person name="Calvo S.E."/>
            <person name="Borkovich K.A."/>
            <person name="Selker E.U."/>
            <person name="Read N.D."/>
            <person name="Jaffe D.B."/>
            <person name="FitzHugh W."/>
            <person name="Ma L.-J."/>
            <person name="Smirnov S."/>
            <person name="Purcell S."/>
            <person name="Rehman B."/>
            <person name="Elkins T."/>
            <person name="Engels R."/>
            <person name="Wang S."/>
            <person name="Nielsen C.B."/>
            <person name="Butler J."/>
            <person name="Endrizzi M."/>
            <person name="Qui D."/>
            <person name="Ianakiev P."/>
            <person name="Bell-Pedersen D."/>
            <person name="Nelson M.A."/>
            <person name="Werner-Washburne M."/>
            <person name="Selitrennikoff C.P."/>
            <person name="Kinsey J.A."/>
            <person name="Braun E.L."/>
            <person name="Zelter A."/>
            <person name="Schulte U."/>
            <person name="Kothe G.O."/>
            <person name="Jedd G."/>
            <person name="Mewes H.-W."/>
            <person name="Staben C."/>
            <person name="Marcotte E."/>
            <person name="Greenberg D."/>
            <person name="Roy A."/>
            <person name="Foley K."/>
            <person name="Naylor J."/>
            <person name="Stange-Thomann N."/>
            <person name="Barrett R."/>
            <person name="Gnerre S."/>
            <person name="Kamal M."/>
            <person name="Kamvysselis M."/>
            <person name="Mauceli E.W."/>
            <person name="Bielke C."/>
            <person name="Rudd S."/>
            <person name="Frishman D."/>
            <person name="Krystofova S."/>
            <person name="Rasmussen C."/>
            <person name="Metzenberg R.L."/>
            <person name="Perkins D.D."/>
            <person name="Kroken S."/>
            <person name="Cogoni C."/>
            <person name="Macino G."/>
            <person name="Catcheside D.E.A."/>
            <person name="Li W."/>
            <person name="Pratt R.J."/>
            <person name="Osmani S.A."/>
            <person name="DeSouza C.P.C."/>
            <person name="Glass N.L."/>
            <person name="Orbach M.J."/>
            <person name="Berglund J.A."/>
            <person name="Voelker R."/>
            <person name="Yarden O."/>
            <person name="Plamann M."/>
            <person name="Seiler S."/>
            <person name="Dunlap J.C."/>
            <person name="Radford A."/>
            <person name="Aramayo R."/>
            <person name="Natvig D.O."/>
            <person name="Alex L.A."/>
            <person name="Mannhaupt G."/>
            <person name="Ebbole D.J."/>
            <person name="Freitag M."/>
            <person name="Paulsen I."/>
            <person name="Sachs M.S."/>
            <person name="Lander E.S."/>
            <person name="Nusbaum C."/>
            <person name="Birren B.W."/>
        </authorList>
    </citation>
    <scope>NUCLEOTIDE SEQUENCE [LARGE SCALE GENOMIC DNA]</scope>
    <source>
        <strain>ATCC 24698 / 74-OR23-1A / CBS 708.71 / DSM 1257 / FGSC 987</strain>
    </source>
</reference>
<proteinExistence type="inferred from homology"/>
<sequence>MARDEIVDDVDVNMEEDDAEAEQRLINEEYKIWKKNSPFLYDMMLSTALEWPTLTTQWFPDVKNPKDKSHTVHRLLLGTHTAEGKPNYLQIAEVEIPKMVELNPRDYDEERGEIGGYGSKASSGEPLCIRFKITQKIDHPGEVNKARYQPQNPDIIATLAVDGRVLIFDRTKHSITPSGTPSPQLELIGHKEEGFGLNWNPHEEGCLVTGSEDKTVLLWDLKTYEGTSKQLKYSRKYTHHSHIVNDVQHHPLVKSWIGTVSDDLTLQIIDVRRPETDKAAIVARNGHSDAINALAFNPRVETIIATASADKTIGIWDMRNMKSKVHTLEGHQDAVTSLEWHPTESAILGSGSYDRRLLFWDISRVGDEQTQDDAEDGPPELLFMHGGHTNHLADFSWNRNDPWLVCSAAEDNLLQIWKVANSIVSKEPADMSTPELDDPKPKQSSH</sequence>
<name>HAT2_NEUCR</name>
<protein>
    <recommendedName>
        <fullName>Histone acetyltransferase type B subunit 2</fullName>
    </recommendedName>
</protein>
<comment type="function">
    <text evidence="2">Regulatory subunit of the histone acetylase B (HAT-B) complex. The complex acetylates 'Lys-12' of histone H4 which is required for telomeric silencing.</text>
</comment>
<comment type="subunit">
    <text evidence="2">Component of the HAT-B complex composed of at least hat-1 and hat-2. The HAT-B complex binds to histone H4 tail.</text>
</comment>
<comment type="subcellular location">
    <subcellularLocation>
        <location evidence="1">Cytoplasm</location>
    </subcellularLocation>
    <subcellularLocation>
        <location evidence="1">Nucleus</location>
    </subcellularLocation>
</comment>
<comment type="similarity">
    <text evidence="4">Belongs to the WD repeat RBAP46/RBAP48/MSI1 family.</text>
</comment>
<organism>
    <name type="scientific">Neurospora crassa (strain ATCC 24698 / 74-OR23-1A / CBS 708.71 / DSM 1257 / FGSC 987)</name>
    <dbReference type="NCBI Taxonomy" id="367110"/>
    <lineage>
        <taxon>Eukaryota</taxon>
        <taxon>Fungi</taxon>
        <taxon>Dikarya</taxon>
        <taxon>Ascomycota</taxon>
        <taxon>Pezizomycotina</taxon>
        <taxon>Sordariomycetes</taxon>
        <taxon>Sordariomycetidae</taxon>
        <taxon>Sordariales</taxon>
        <taxon>Sordariaceae</taxon>
        <taxon>Neurospora</taxon>
    </lineage>
</organism>